<sequence>MFRVLNNDVYSPAVVQQQTTLAFGKASSLCTDNRSANDQCEMGENFRESGQDHVKRPMNAFIVWSRERRRKVALENPQMQNSEISKQPGYEWKRLTDAGKRPFFEEAQRLLAIHQDKYPGYKYRPRRKAKRPQNSLPSVSSILCNQMSVETLHPFTYRDGCAKTTYSPMESQLSRLQSMTSSLLQKEHHSSWTSLGHNRVTMATHIFADFPFYQSLEPRLSCAYFPY</sequence>
<keyword id="KW-0010">Activator</keyword>
<keyword id="KW-0112">Calmodulin-binding</keyword>
<keyword id="KW-0963">Cytoplasm</keyword>
<keyword id="KW-0221">Differentiation</keyword>
<keyword id="KW-0238">DNA-binding</keyword>
<keyword id="KW-0539">Nucleus</keyword>
<keyword id="KW-0678">Repressor</keyword>
<keyword id="KW-0726">Sexual differentiation</keyword>
<keyword id="KW-0804">Transcription</keyword>
<keyword id="KW-0805">Transcription regulation</keyword>
<comment type="function">
    <text evidence="1 2">Transcriptional regulator that controls a genetic switch in male development. It is necessary and sufficient for initiating male sex determination by directing the development of supporting cell precursors (pre-Sertoli cells) as Sertoli rather than granulosa cells. Involved in different aspects of gene regulation including promoter activation or repression. Binds to the DNA consensus sequence 5'-[AT]AACAA[AT]-3'. SRY HMG box recognizes DNA by partial intercalation in the minor groove and promotes DNA bending. Also involved in pre-mRNA splicing (By similarity). In male adult brain involved in the maintenance of motor functions of dopaminergic neurons (By similarity).</text>
</comment>
<comment type="subunit">
    <text evidence="2">Interacts with CALM, EP300, HDAC3, KPNB1, ZNF208 isoform KRAB-O, PARP1, SLC9A3R2 and WT1. The interaction with EP300 modulates its DNA-binding activity. The interaction with KPNB1 is sensitive to dissociation by Ran in the GTP-bound form. Interaction with PARP1 impaired its DNA-binding activity.</text>
</comment>
<comment type="subcellular location">
    <subcellularLocation>
        <location evidence="2">Nucleus speckle</location>
    </subcellularLocation>
    <subcellularLocation>
        <location evidence="2">Cytoplasm</location>
    </subcellularLocation>
    <subcellularLocation>
        <location evidence="2">Nucleus</location>
    </subcellularLocation>
</comment>
<comment type="similarity">
    <text evidence="4">Belongs to the SRY family.</text>
</comment>
<comment type="online information" name="Protein Spotlight">
    <link uri="https://www.proteinspotlight.org/back_issues/080"/>
    <text>The tenuous nature of sex - Issue 80 of March 2007</text>
</comment>
<reference key="1">
    <citation type="submission" date="2003-07" db="EMBL/GenBank/DDBJ databases">
        <title>Cloning of SRY from Moschus berezovskii and Moschus chrysogaster and a phylogeny with Cervidae, Bovidae animals.</title>
        <authorList>
            <person name="Zhang L."/>
            <person name="Zou F.D."/>
            <person name="Yue B.S."/>
            <person name="Zhao E.M."/>
        </authorList>
    </citation>
    <scope>NUCLEOTIDE SEQUENCE [GENOMIC DNA]</scope>
</reference>
<dbReference type="EMBL" id="AY357219">
    <property type="protein sequence ID" value="AAQ67731.1"/>
    <property type="molecule type" value="Genomic_DNA"/>
</dbReference>
<dbReference type="SMR" id="Q67EX6"/>
<dbReference type="GO" id="GO:0005737">
    <property type="term" value="C:cytoplasm"/>
    <property type="evidence" value="ECO:0007669"/>
    <property type="project" value="UniProtKB-SubCell"/>
</dbReference>
<dbReference type="GO" id="GO:0016607">
    <property type="term" value="C:nuclear speck"/>
    <property type="evidence" value="ECO:0007669"/>
    <property type="project" value="UniProtKB-SubCell"/>
</dbReference>
<dbReference type="GO" id="GO:0005634">
    <property type="term" value="C:nucleus"/>
    <property type="evidence" value="ECO:0000250"/>
    <property type="project" value="UniProtKB"/>
</dbReference>
<dbReference type="GO" id="GO:0005516">
    <property type="term" value="F:calmodulin binding"/>
    <property type="evidence" value="ECO:0007669"/>
    <property type="project" value="UniProtKB-KW"/>
</dbReference>
<dbReference type="GO" id="GO:0001228">
    <property type="term" value="F:DNA-binding transcription activator activity, RNA polymerase II-specific"/>
    <property type="evidence" value="ECO:0007669"/>
    <property type="project" value="TreeGrafter"/>
</dbReference>
<dbReference type="GO" id="GO:0000978">
    <property type="term" value="F:RNA polymerase II cis-regulatory region sequence-specific DNA binding"/>
    <property type="evidence" value="ECO:0007669"/>
    <property type="project" value="TreeGrafter"/>
</dbReference>
<dbReference type="GO" id="GO:0030154">
    <property type="term" value="P:cell differentiation"/>
    <property type="evidence" value="ECO:0007669"/>
    <property type="project" value="UniProtKB-KW"/>
</dbReference>
<dbReference type="GO" id="GO:0030238">
    <property type="term" value="P:male sex determination"/>
    <property type="evidence" value="ECO:0007669"/>
    <property type="project" value="InterPro"/>
</dbReference>
<dbReference type="GO" id="GO:0007548">
    <property type="term" value="P:sex differentiation"/>
    <property type="evidence" value="ECO:0007669"/>
    <property type="project" value="UniProtKB-KW"/>
</dbReference>
<dbReference type="CDD" id="cd22034">
    <property type="entry name" value="HMG-box_SoxA_SRY"/>
    <property type="match status" value="1"/>
</dbReference>
<dbReference type="FunFam" id="1.10.30.10:FF:000002">
    <property type="entry name" value="transcription factor Sox-2"/>
    <property type="match status" value="1"/>
</dbReference>
<dbReference type="Gene3D" id="1.10.30.10">
    <property type="entry name" value="High mobility group box domain"/>
    <property type="match status" value="1"/>
</dbReference>
<dbReference type="InterPro" id="IPR009071">
    <property type="entry name" value="HMG_box_dom"/>
</dbReference>
<dbReference type="InterPro" id="IPR036910">
    <property type="entry name" value="HMG_box_dom_sf"/>
</dbReference>
<dbReference type="InterPro" id="IPR017253">
    <property type="entry name" value="SRY"/>
</dbReference>
<dbReference type="InterPro" id="IPR050140">
    <property type="entry name" value="SRY-related_HMG-box_TF-like"/>
</dbReference>
<dbReference type="PANTHER" id="PTHR10270:SF161">
    <property type="entry name" value="SEX-DETERMINING REGION Y PROTEIN"/>
    <property type="match status" value="1"/>
</dbReference>
<dbReference type="PANTHER" id="PTHR10270">
    <property type="entry name" value="SOX TRANSCRIPTION FACTOR"/>
    <property type="match status" value="1"/>
</dbReference>
<dbReference type="Pfam" id="PF00505">
    <property type="entry name" value="HMG_box"/>
    <property type="match status" value="1"/>
</dbReference>
<dbReference type="PIRSF" id="PIRSF037653">
    <property type="entry name" value="SRY"/>
    <property type="match status" value="1"/>
</dbReference>
<dbReference type="SMART" id="SM00398">
    <property type="entry name" value="HMG"/>
    <property type="match status" value="1"/>
</dbReference>
<dbReference type="SUPFAM" id="SSF47095">
    <property type="entry name" value="HMG-box"/>
    <property type="match status" value="1"/>
</dbReference>
<dbReference type="PROSITE" id="PS50118">
    <property type="entry name" value="HMG_BOX_2"/>
    <property type="match status" value="1"/>
</dbReference>
<protein>
    <recommendedName>
        <fullName>Sex-determining region Y protein</fullName>
    </recommendedName>
    <alternativeName>
        <fullName>Testis-determining factor</fullName>
    </alternativeName>
</protein>
<name>SRY_MOSCH</name>
<gene>
    <name type="primary">SRY</name>
    <name type="synonym">TDF</name>
</gene>
<accession>Q67EX6</accession>
<evidence type="ECO:0000250" key="1">
    <source>
        <dbReference type="UniProtKB" id="P36394"/>
    </source>
</evidence>
<evidence type="ECO:0000250" key="2">
    <source>
        <dbReference type="UniProtKB" id="Q05066"/>
    </source>
</evidence>
<evidence type="ECO:0000255" key="3">
    <source>
        <dbReference type="PROSITE-ProRule" id="PRU00267"/>
    </source>
</evidence>
<evidence type="ECO:0000305" key="4"/>
<organism>
    <name type="scientific">Moschus chrysogaster</name>
    <name type="common">Alpine musk deer</name>
    <dbReference type="NCBI Taxonomy" id="68412"/>
    <lineage>
        <taxon>Eukaryota</taxon>
        <taxon>Metazoa</taxon>
        <taxon>Chordata</taxon>
        <taxon>Craniata</taxon>
        <taxon>Vertebrata</taxon>
        <taxon>Euteleostomi</taxon>
        <taxon>Mammalia</taxon>
        <taxon>Eutheria</taxon>
        <taxon>Laurasiatheria</taxon>
        <taxon>Artiodactyla</taxon>
        <taxon>Ruminantia</taxon>
        <taxon>Pecora</taxon>
        <taxon>Moschidae</taxon>
        <taxon>Moschus</taxon>
    </lineage>
</organism>
<proteinExistence type="inferred from homology"/>
<feature type="chain" id="PRO_0000048686" description="Sex-determining region Y protein">
    <location>
        <begin position="1"/>
        <end position="227"/>
    </location>
</feature>
<feature type="DNA-binding region" description="HMG box" evidence="3">
    <location>
        <begin position="54"/>
        <end position="122"/>
    </location>
</feature>